<protein>
    <recommendedName>
        <fullName>Bifunctional heparan sulfate N-deacetylase/N-sulfotransferase 4</fullName>
        <ecNumber>2.8.2.8</ecNumber>
    </recommendedName>
    <alternativeName>
        <fullName>Glucosaminyl N-deacetylase/N-sulfotransferase 4</fullName>
        <shortName>NDST-4</shortName>
    </alternativeName>
    <alternativeName>
        <fullName>N-heparan sulfate sulfotransferase 4</fullName>
        <shortName>N-HSST 4</shortName>
    </alternativeName>
    <domain>
        <recommendedName>
            <fullName>Heparan sulfate N-deacetylase 4</fullName>
            <ecNumber>3.-.-.-</ecNumber>
        </recommendedName>
    </domain>
    <domain>
        <recommendedName>
            <fullName>Heparan sulfate N-sulfotransferase 4</fullName>
            <ecNumber>2.8.2.-</ecNumber>
        </recommendedName>
    </domain>
</protein>
<dbReference type="EC" id="2.8.2.8"/>
<dbReference type="EC" id="3.-.-.-"/>
<dbReference type="EC" id="2.8.2.-"/>
<dbReference type="EMBL" id="AB036838">
    <property type="protein sequence ID" value="BAB18517.1"/>
    <property type="molecule type" value="mRNA"/>
</dbReference>
<dbReference type="EMBL" id="AC111141">
    <property type="status" value="NOT_ANNOTATED_CDS"/>
    <property type="molecule type" value="Genomic_DNA"/>
</dbReference>
<dbReference type="EMBL" id="AC140797">
    <property type="status" value="NOT_ANNOTATED_CDS"/>
    <property type="molecule type" value="Genomic_DNA"/>
</dbReference>
<dbReference type="EMBL" id="AC164153">
    <property type="status" value="NOT_ANNOTATED_CDS"/>
    <property type="molecule type" value="Genomic_DNA"/>
</dbReference>
<dbReference type="CCDS" id="CCDS17820.1"/>
<dbReference type="RefSeq" id="NP_072087.2">
    <property type="nucleotide sequence ID" value="NM_022565.3"/>
</dbReference>
<dbReference type="RefSeq" id="XP_017175172.1">
    <property type="nucleotide sequence ID" value="XM_017319683.1"/>
</dbReference>
<dbReference type="SMR" id="Q9EQW8"/>
<dbReference type="BioGRID" id="211087">
    <property type="interactions" value="1"/>
</dbReference>
<dbReference type="FunCoup" id="Q9EQW8">
    <property type="interactions" value="451"/>
</dbReference>
<dbReference type="STRING" id="10090.ENSMUSP00000133341"/>
<dbReference type="GlyCosmos" id="Q9EQW8">
    <property type="glycosylation" value="5 sites, No reported glycans"/>
</dbReference>
<dbReference type="GlyGen" id="Q9EQW8">
    <property type="glycosylation" value="6 sites, 1 N-linked glycan (1 site)"/>
</dbReference>
<dbReference type="PhosphoSitePlus" id="Q9EQW8"/>
<dbReference type="PaxDb" id="10090-ENSMUSP00000133341"/>
<dbReference type="ProteomicsDB" id="286163"/>
<dbReference type="Antibodypedia" id="2469">
    <property type="antibodies" value="103 antibodies from 16 providers"/>
</dbReference>
<dbReference type="DNASU" id="64580"/>
<dbReference type="Ensembl" id="ENSMUST00000173932.8">
    <property type="protein sequence ID" value="ENSMUSP00000133341.3"/>
    <property type="gene ID" value="ENSMUSG00000027971.17"/>
</dbReference>
<dbReference type="GeneID" id="64580"/>
<dbReference type="KEGG" id="mmu:64580"/>
<dbReference type="UCSC" id="uc008rfv.2">
    <property type="organism name" value="mouse"/>
</dbReference>
<dbReference type="AGR" id="MGI:1932545"/>
<dbReference type="CTD" id="64579"/>
<dbReference type="MGI" id="MGI:1932545">
    <property type="gene designation" value="Ndst4"/>
</dbReference>
<dbReference type="VEuPathDB" id="HostDB:ENSMUSG00000027971"/>
<dbReference type="eggNOG" id="KOG3703">
    <property type="taxonomic scope" value="Eukaryota"/>
</dbReference>
<dbReference type="GeneTree" id="ENSGT00940000157168"/>
<dbReference type="HOGENOM" id="CLU_011357_2_0_1"/>
<dbReference type="InParanoid" id="Q9EQW8"/>
<dbReference type="OMA" id="ECTDIKI"/>
<dbReference type="OrthoDB" id="8958249at2759"/>
<dbReference type="PhylomeDB" id="Q9EQW8"/>
<dbReference type="TreeFam" id="TF313193"/>
<dbReference type="BRENDA" id="2.8.2.8">
    <property type="organism ID" value="3474"/>
</dbReference>
<dbReference type="Reactome" id="R-MMU-2022928">
    <property type="pathway name" value="HS-GAG biosynthesis"/>
</dbReference>
<dbReference type="UniPathway" id="UPA00756"/>
<dbReference type="UniPathway" id="UPA00862"/>
<dbReference type="BioGRID-ORCS" id="64580">
    <property type="hits" value="0 hits in 77 CRISPR screens"/>
</dbReference>
<dbReference type="ChiTaRS" id="Ndst4">
    <property type="organism name" value="mouse"/>
</dbReference>
<dbReference type="PRO" id="PR:Q9EQW8"/>
<dbReference type="Proteomes" id="UP000000589">
    <property type="component" value="Chromosome 3"/>
</dbReference>
<dbReference type="RNAct" id="Q9EQW8">
    <property type="molecule type" value="protein"/>
</dbReference>
<dbReference type="Bgee" id="ENSMUSG00000027971">
    <property type="expression patterns" value="Expressed in seminiferous tubule of testis and 46 other cell types or tissues"/>
</dbReference>
<dbReference type="ExpressionAtlas" id="Q9EQW8">
    <property type="expression patterns" value="baseline and differential"/>
</dbReference>
<dbReference type="GO" id="GO:0000139">
    <property type="term" value="C:Golgi membrane"/>
    <property type="evidence" value="ECO:0007669"/>
    <property type="project" value="UniProtKB-SubCell"/>
</dbReference>
<dbReference type="GO" id="GO:0019213">
    <property type="term" value="F:deacetylase activity"/>
    <property type="evidence" value="ECO:0000314"/>
    <property type="project" value="MGI"/>
</dbReference>
<dbReference type="GO" id="GO:0015016">
    <property type="term" value="F:heparan sulfate N-sulfotransferase activity"/>
    <property type="evidence" value="ECO:0000314"/>
    <property type="project" value="MGI"/>
</dbReference>
<dbReference type="GO" id="GO:0050119">
    <property type="term" value="F:N-acetylglucosamine deacetylase activity"/>
    <property type="evidence" value="ECO:0000314"/>
    <property type="project" value="MGI"/>
</dbReference>
<dbReference type="GO" id="GO:0008146">
    <property type="term" value="F:sulfotransferase activity"/>
    <property type="evidence" value="ECO:0000314"/>
    <property type="project" value="MGI"/>
</dbReference>
<dbReference type="GO" id="GO:0015012">
    <property type="term" value="P:heparan sulfate proteoglycan biosynthetic process"/>
    <property type="evidence" value="ECO:0007669"/>
    <property type="project" value="UniProtKB-UniPathway"/>
</dbReference>
<dbReference type="GO" id="GO:0030210">
    <property type="term" value="P:heparin proteoglycan biosynthetic process"/>
    <property type="evidence" value="ECO:0007669"/>
    <property type="project" value="UniProtKB-UniPathway"/>
</dbReference>
<dbReference type="FunFam" id="3.40.50.300:FF:000176">
    <property type="entry name" value="bifunctional heparan sulfate N-deacetylase/N-sulfotransferase 1"/>
    <property type="match status" value="1"/>
</dbReference>
<dbReference type="Gene3D" id="3.40.50.300">
    <property type="entry name" value="P-loop containing nucleotide triphosphate hydrolases"/>
    <property type="match status" value="1"/>
</dbReference>
<dbReference type="InterPro" id="IPR021930">
    <property type="entry name" value="Heparan_SO4_deacetylase_dom"/>
</dbReference>
<dbReference type="InterPro" id="IPR056793">
    <property type="entry name" value="HSNSD_N"/>
</dbReference>
<dbReference type="InterPro" id="IPR037359">
    <property type="entry name" value="NST/OST"/>
</dbReference>
<dbReference type="InterPro" id="IPR027417">
    <property type="entry name" value="P-loop_NTPase"/>
</dbReference>
<dbReference type="InterPro" id="IPR000863">
    <property type="entry name" value="Sulfotransferase_dom"/>
</dbReference>
<dbReference type="PANTHER" id="PTHR10605:SF45">
    <property type="entry name" value="BIFUNCTIONAL HEPARAN SULFATE N-DEACETYLASE_N-SULFOTRANSFERASE 4"/>
    <property type="match status" value="1"/>
</dbReference>
<dbReference type="PANTHER" id="PTHR10605">
    <property type="entry name" value="HEPARAN SULFATE SULFOTRANSFERASE"/>
    <property type="match status" value="1"/>
</dbReference>
<dbReference type="Pfam" id="PF12062">
    <property type="entry name" value="HSNSD-CE"/>
    <property type="match status" value="1"/>
</dbReference>
<dbReference type="Pfam" id="PF25119">
    <property type="entry name" value="HSNSD_N"/>
    <property type="match status" value="1"/>
</dbReference>
<dbReference type="Pfam" id="PF00685">
    <property type="entry name" value="Sulfotransfer_1"/>
    <property type="match status" value="1"/>
</dbReference>
<dbReference type="SUPFAM" id="SSF52540">
    <property type="entry name" value="P-loop containing nucleoside triphosphate hydrolases"/>
    <property type="match status" value="1"/>
</dbReference>
<feature type="chain" id="PRO_0000225662" description="Bifunctional heparan sulfate N-deacetylase/N-sulfotransferase 4">
    <location>
        <begin position="1"/>
        <end position="872"/>
    </location>
</feature>
<feature type="topological domain" description="Cytoplasmic" evidence="2">
    <location>
        <begin position="1"/>
        <end position="13"/>
    </location>
</feature>
<feature type="transmembrane region" description="Helical; Signal-anchor for type II membrane protein" evidence="2">
    <location>
        <begin position="14"/>
        <end position="34"/>
    </location>
</feature>
<feature type="topological domain" description="Lumenal" evidence="2">
    <location>
        <begin position="35"/>
        <end position="872"/>
    </location>
</feature>
<feature type="region of interest" description="Heparan sulfate N-deacetylase 4">
    <location>
        <begin position="36"/>
        <end position="588"/>
    </location>
</feature>
<feature type="region of interest" description="Heparan sulfate N-sulfotransferase 4">
    <location>
        <begin position="589"/>
        <end position="872"/>
    </location>
</feature>
<feature type="active site" description="For sulfotransferase activity" evidence="1">
    <location>
        <position position="604"/>
    </location>
</feature>
<feature type="binding site" evidence="1">
    <location>
        <begin position="604"/>
        <end position="608"/>
    </location>
    <ligand>
        <name>3'-phosphoadenylyl sulfate</name>
        <dbReference type="ChEBI" id="CHEBI:58339"/>
    </ligand>
</feature>
<feature type="binding site" evidence="1">
    <location>
        <position position="702"/>
    </location>
    <ligand>
        <name>3'-phosphoadenylyl sulfate</name>
        <dbReference type="ChEBI" id="CHEBI:58339"/>
    </ligand>
</feature>
<feature type="binding site" evidence="1">
    <location>
        <begin position="823"/>
        <end position="827"/>
    </location>
    <ligand>
        <name>3'-phosphoadenylyl sulfate</name>
        <dbReference type="ChEBI" id="CHEBI:58339"/>
    </ligand>
</feature>
<feature type="glycosylation site" description="N-linked (GlcNAc...) asparagine" evidence="2">
    <location>
        <position position="226"/>
    </location>
</feature>
<feature type="glycosylation site" description="N-linked (GlcNAc...) asparagine" evidence="2">
    <location>
        <position position="341"/>
    </location>
</feature>
<feature type="glycosylation site" description="N-linked (GlcNAc...) asparagine" evidence="2">
    <location>
        <position position="391"/>
    </location>
</feature>
<feature type="glycosylation site" description="N-linked (GlcNAc...) asparagine" evidence="2">
    <location>
        <position position="657"/>
    </location>
</feature>
<feature type="glycosylation site" description="N-linked (GlcNAc...) asparagine" evidence="2">
    <location>
        <position position="793"/>
    </location>
</feature>
<feature type="disulfide bond" evidence="1">
    <location>
        <begin position="808"/>
        <end position="818"/>
    </location>
</feature>
<feature type="sequence conflict" description="In Ref. 1; BAB18517." evidence="4" ref="1">
    <original>A</original>
    <variation>T</variation>
    <location>
        <position position="681"/>
    </location>
</feature>
<proteinExistence type="evidence at transcript level"/>
<accession>Q9EQW8</accession>
<accession>D3Z1R7</accession>
<comment type="function">
    <text evidence="3">Essential bifunctional enzyme that catalyzes both the N-deacetylation and the N-sulfation of glucosamine (GlcNAc) of the glycosaminoglycan in heparan sulfate. Modifies the GlcNAc-GlcA disaccharide repeating sugar backbone to make N-sulfated heparosan, a prerequisite substrate for later modifications in heparin biosynthesis. Has low deacetylase activity but high sulfotransferase activity.</text>
</comment>
<comment type="catalytic activity">
    <reaction>
        <text>alpha-D-glucosaminyl-[heparan sulfate](n) + 3'-phosphoadenylyl sulfate = N-sulfo-alpha-D-glucosaminyl-[heparan sulfate](n) + adenosine 3',5'-bisphosphate + 2 H(+)</text>
        <dbReference type="Rhea" id="RHEA:21980"/>
        <dbReference type="Rhea" id="RHEA-COMP:9830"/>
        <dbReference type="Rhea" id="RHEA-COMP:14602"/>
        <dbReference type="ChEBI" id="CHEBI:15378"/>
        <dbReference type="ChEBI" id="CHEBI:58339"/>
        <dbReference type="ChEBI" id="CHEBI:58343"/>
        <dbReference type="ChEBI" id="CHEBI:58388"/>
        <dbReference type="ChEBI" id="CHEBI:140572"/>
        <dbReference type="EC" id="2.8.2.8"/>
    </reaction>
</comment>
<comment type="pathway">
    <text>Glycan metabolism; heparan sulfate biosynthesis.</text>
</comment>
<comment type="pathway">
    <text>Glycan metabolism; heparin biosynthesis.</text>
</comment>
<comment type="subunit">
    <text evidence="1">Monomer.</text>
</comment>
<comment type="subcellular location">
    <subcellularLocation>
        <location evidence="1">Golgi apparatus membrane</location>
        <topology evidence="1">Single-pass type II membrane protein</topology>
    </subcellularLocation>
</comment>
<comment type="tissue specificity">
    <text evidence="3">Expressed at low level in brain and throughout embryogenesis. Not expressed in other tissues.</text>
</comment>
<comment type="miscellaneous">
    <text>The presence of 4 different heparan sulfate N-deacetylase/N-sulfotransferase enzymes in mammals, as well as differences in their enzyme activity suggest that some initiate heparan sulfate modification/sulfation reactions, whereas other later on fill in or extend already modified heparan sulfate sequences.</text>
</comment>
<comment type="similarity">
    <text evidence="4">Belongs to the sulfotransferase 1 family. NDST subfamily.</text>
</comment>
<reference key="1">
    <citation type="journal article" date="2001" name="J. Biol. Chem.">
        <title>Multiple isozymes of heparan sulfate/heparin GlcNAc N-deacetylase/GlcN N-sulfotransferase. Structure and activity of the fourth member, NDST4.</title>
        <authorList>
            <person name="Aikawa J."/>
            <person name="Grobe K."/>
            <person name="Tsujimoto M."/>
            <person name="Esko J.D."/>
        </authorList>
    </citation>
    <scope>NUCLEOTIDE SEQUENCE [MRNA]</scope>
    <scope>FUNCTION</scope>
    <scope>TISSUE SPECIFICITY</scope>
    <source>
        <tissue>Brain</tissue>
    </source>
</reference>
<reference key="2">
    <citation type="journal article" date="2009" name="PLoS Biol.">
        <title>Lineage-specific biology revealed by a finished genome assembly of the mouse.</title>
        <authorList>
            <person name="Church D.M."/>
            <person name="Goodstadt L."/>
            <person name="Hillier L.W."/>
            <person name="Zody M.C."/>
            <person name="Goldstein S."/>
            <person name="She X."/>
            <person name="Bult C.J."/>
            <person name="Agarwala R."/>
            <person name="Cherry J.L."/>
            <person name="DiCuccio M."/>
            <person name="Hlavina W."/>
            <person name="Kapustin Y."/>
            <person name="Meric P."/>
            <person name="Maglott D."/>
            <person name="Birtle Z."/>
            <person name="Marques A.C."/>
            <person name="Graves T."/>
            <person name="Zhou S."/>
            <person name="Teague B."/>
            <person name="Potamousis K."/>
            <person name="Churas C."/>
            <person name="Place M."/>
            <person name="Herschleb J."/>
            <person name="Runnheim R."/>
            <person name="Forrest D."/>
            <person name="Amos-Landgraf J."/>
            <person name="Schwartz D.C."/>
            <person name="Cheng Z."/>
            <person name="Lindblad-Toh K."/>
            <person name="Eichler E.E."/>
            <person name="Ponting C.P."/>
        </authorList>
    </citation>
    <scope>NUCLEOTIDE SEQUENCE [LARGE SCALE GENOMIC DNA]</scope>
    <source>
        <strain>C57BL/6J</strain>
    </source>
</reference>
<sequence length="872" mass="100655">MNLILKFRRSFRTLIVLLATFCLVSILISAYFLYSGYKQEMTLIETTAEAECADIKDLPYRSIELRTIKPIDTSKTDPTVLLFVESQYSQLGQDIIAILESSRFQYQMVIAPGKGDIPPLTDSGKGKYTLIIYENILKYVSMDSWNRELLEKYCIEYSVSIIGFHKANENSLPTTQLKGFPLNLFNNVALKDCSVNPQSPLLHITKGPKVEKGPLPGEDWTIFQYNHSTYQPVLLTELQSEKSLSFLSSQTLYATIIQDLGLHDGIQRVLFGNNLNFWLHKLIFIDAISFLSGKRLTLSLDRYILVDIDDIFVGKEGTRMNVKDVKALLETQNLLRTQVANFTFNLGFSGKFYHTGTEEEDEGDDLLLRSVDEFWWFPHMWSHMQPHLFHNESSLVEQMILNKEFALEHGIPINLGYAVAPHHSGVYPVHIQLYAAWKKVWGIQVTSTEEYPHLKPARYRKGFIHNSIMVLPRQTCGLFTHTIFYKEYPGGPQELDKSIKGGELFLTILLNPISIFMTHLSNYGNDRLGLYTFVNLANFVHSWTNLKLQTLPPVQLAHKYFELFPEQKDPLWQNPCDDKRHKDIWSREKTCDHLPKFLVIGPQKTGTTALYLFLLMHPSIISNLPSPKTFEEVQFFNGNNYHKGIEWYMDFFPTPSNITSDFLFEKSANYFHSEEAPKRAASLVPKAKIITILIDPSDRAYSWYQHQRSHEDPAALRFNFYEVITTGHWAPPDLKTLQRRCLVPGWYAVHIERWLAYFSTSQLLIIDGQQLRSDPATVMDEVQKFLGVTPHYNYSEALTFDPQKGFWCQLLEGGKTKCLGKSKGRKYPPMDSESRTFLSSYYRDHNVELSKLLHRLGQPLPSWLRQELQKVR</sequence>
<gene>
    <name type="primary">Ndst4</name>
    <name type="synonym">Hsst4</name>
</gene>
<keyword id="KW-1015">Disulfide bond</keyword>
<keyword id="KW-0325">Glycoprotein</keyword>
<keyword id="KW-0333">Golgi apparatus</keyword>
<keyword id="KW-0378">Hydrolase</keyword>
<keyword id="KW-0472">Membrane</keyword>
<keyword id="KW-0511">Multifunctional enzyme</keyword>
<keyword id="KW-1185">Reference proteome</keyword>
<keyword id="KW-0735">Signal-anchor</keyword>
<keyword id="KW-0808">Transferase</keyword>
<keyword id="KW-0812">Transmembrane</keyword>
<keyword id="KW-1133">Transmembrane helix</keyword>
<evidence type="ECO:0000250" key="1"/>
<evidence type="ECO:0000255" key="2"/>
<evidence type="ECO:0000269" key="3">
    <source>
    </source>
</evidence>
<evidence type="ECO:0000305" key="4"/>
<name>NDST4_MOUSE</name>
<organism>
    <name type="scientific">Mus musculus</name>
    <name type="common">Mouse</name>
    <dbReference type="NCBI Taxonomy" id="10090"/>
    <lineage>
        <taxon>Eukaryota</taxon>
        <taxon>Metazoa</taxon>
        <taxon>Chordata</taxon>
        <taxon>Craniata</taxon>
        <taxon>Vertebrata</taxon>
        <taxon>Euteleostomi</taxon>
        <taxon>Mammalia</taxon>
        <taxon>Eutheria</taxon>
        <taxon>Euarchontoglires</taxon>
        <taxon>Glires</taxon>
        <taxon>Rodentia</taxon>
        <taxon>Myomorpha</taxon>
        <taxon>Muroidea</taxon>
        <taxon>Muridae</taxon>
        <taxon>Murinae</taxon>
        <taxon>Mus</taxon>
        <taxon>Mus</taxon>
    </lineage>
</organism>